<proteinExistence type="inferred from homology"/>
<gene>
    <name evidence="1" type="primary">gmhA</name>
    <name type="ordered locus">Shal_4070</name>
</gene>
<reference key="1">
    <citation type="submission" date="2008-01" db="EMBL/GenBank/DDBJ databases">
        <title>Complete sequence of Shewanella halifaxensis HAW-EB4.</title>
        <authorList>
            <consortium name="US DOE Joint Genome Institute"/>
            <person name="Copeland A."/>
            <person name="Lucas S."/>
            <person name="Lapidus A."/>
            <person name="Glavina del Rio T."/>
            <person name="Dalin E."/>
            <person name="Tice H."/>
            <person name="Bruce D."/>
            <person name="Goodwin L."/>
            <person name="Pitluck S."/>
            <person name="Sims D."/>
            <person name="Brettin T."/>
            <person name="Detter J.C."/>
            <person name="Han C."/>
            <person name="Kuske C.R."/>
            <person name="Schmutz J."/>
            <person name="Larimer F."/>
            <person name="Land M."/>
            <person name="Hauser L."/>
            <person name="Kyrpides N."/>
            <person name="Kim E."/>
            <person name="Zhao J.-S."/>
            <person name="Richardson P."/>
        </authorList>
    </citation>
    <scope>NUCLEOTIDE SEQUENCE [LARGE SCALE GENOMIC DNA]</scope>
    <source>
        <strain>HAW-EB4</strain>
    </source>
</reference>
<dbReference type="EC" id="5.3.1.28" evidence="1"/>
<dbReference type="EMBL" id="CP000931">
    <property type="protein sequence ID" value="ABZ78610.1"/>
    <property type="molecule type" value="Genomic_DNA"/>
</dbReference>
<dbReference type="RefSeq" id="WP_012279127.1">
    <property type="nucleotide sequence ID" value="NC_010334.1"/>
</dbReference>
<dbReference type="SMR" id="B0TL65"/>
<dbReference type="STRING" id="458817.Shal_4070"/>
<dbReference type="KEGG" id="shl:Shal_4070"/>
<dbReference type="eggNOG" id="COG0279">
    <property type="taxonomic scope" value="Bacteria"/>
</dbReference>
<dbReference type="HOGENOM" id="CLU_080999_3_1_6"/>
<dbReference type="OrthoDB" id="9810929at2"/>
<dbReference type="UniPathway" id="UPA00041">
    <property type="reaction ID" value="UER00436"/>
</dbReference>
<dbReference type="Proteomes" id="UP000001317">
    <property type="component" value="Chromosome"/>
</dbReference>
<dbReference type="GO" id="GO:0005737">
    <property type="term" value="C:cytoplasm"/>
    <property type="evidence" value="ECO:0007669"/>
    <property type="project" value="UniProtKB-SubCell"/>
</dbReference>
<dbReference type="GO" id="GO:0097367">
    <property type="term" value="F:carbohydrate derivative binding"/>
    <property type="evidence" value="ECO:0007669"/>
    <property type="project" value="InterPro"/>
</dbReference>
<dbReference type="GO" id="GO:0008968">
    <property type="term" value="F:D-sedoheptulose 7-phosphate isomerase activity"/>
    <property type="evidence" value="ECO:0007669"/>
    <property type="project" value="UniProtKB-UniRule"/>
</dbReference>
<dbReference type="GO" id="GO:0008270">
    <property type="term" value="F:zinc ion binding"/>
    <property type="evidence" value="ECO:0007669"/>
    <property type="project" value="UniProtKB-UniRule"/>
</dbReference>
<dbReference type="GO" id="GO:0005975">
    <property type="term" value="P:carbohydrate metabolic process"/>
    <property type="evidence" value="ECO:0007669"/>
    <property type="project" value="UniProtKB-UniRule"/>
</dbReference>
<dbReference type="GO" id="GO:2001061">
    <property type="term" value="P:D-glycero-D-manno-heptose 7-phosphate biosynthetic process"/>
    <property type="evidence" value="ECO:0007669"/>
    <property type="project" value="UniProtKB-UniPathway"/>
</dbReference>
<dbReference type="CDD" id="cd05006">
    <property type="entry name" value="SIS_GmhA"/>
    <property type="match status" value="1"/>
</dbReference>
<dbReference type="Gene3D" id="3.40.50.10490">
    <property type="entry name" value="Glucose-6-phosphate isomerase like protein, domain 1"/>
    <property type="match status" value="1"/>
</dbReference>
<dbReference type="HAMAP" id="MF_00067">
    <property type="entry name" value="GmhA"/>
    <property type="match status" value="1"/>
</dbReference>
<dbReference type="InterPro" id="IPR035461">
    <property type="entry name" value="GmhA/DiaA"/>
</dbReference>
<dbReference type="InterPro" id="IPR004515">
    <property type="entry name" value="Phosphoheptose_Isoase"/>
</dbReference>
<dbReference type="InterPro" id="IPR001347">
    <property type="entry name" value="SIS_dom"/>
</dbReference>
<dbReference type="InterPro" id="IPR046348">
    <property type="entry name" value="SIS_dom_sf"/>
</dbReference>
<dbReference type="InterPro" id="IPR050099">
    <property type="entry name" value="SIS_GmhA/DiaA_subfam"/>
</dbReference>
<dbReference type="NCBIfam" id="NF010546">
    <property type="entry name" value="PRK13936.1"/>
    <property type="match status" value="1"/>
</dbReference>
<dbReference type="PANTHER" id="PTHR30390:SF6">
    <property type="entry name" value="DNAA INITIATOR-ASSOCIATING PROTEIN DIAA"/>
    <property type="match status" value="1"/>
</dbReference>
<dbReference type="PANTHER" id="PTHR30390">
    <property type="entry name" value="SEDOHEPTULOSE 7-PHOSPHATE ISOMERASE / DNAA INITIATOR-ASSOCIATING FACTOR FOR REPLICATION INITIATION"/>
    <property type="match status" value="1"/>
</dbReference>
<dbReference type="Pfam" id="PF13580">
    <property type="entry name" value="SIS_2"/>
    <property type="match status" value="1"/>
</dbReference>
<dbReference type="SUPFAM" id="SSF53697">
    <property type="entry name" value="SIS domain"/>
    <property type="match status" value="1"/>
</dbReference>
<dbReference type="PROSITE" id="PS51464">
    <property type="entry name" value="SIS"/>
    <property type="match status" value="1"/>
</dbReference>
<evidence type="ECO:0000255" key="1">
    <source>
        <dbReference type="HAMAP-Rule" id="MF_00067"/>
    </source>
</evidence>
<organism>
    <name type="scientific">Shewanella halifaxensis (strain HAW-EB4)</name>
    <dbReference type="NCBI Taxonomy" id="458817"/>
    <lineage>
        <taxon>Bacteria</taxon>
        <taxon>Pseudomonadati</taxon>
        <taxon>Pseudomonadota</taxon>
        <taxon>Gammaproteobacteria</taxon>
        <taxon>Alteromonadales</taxon>
        <taxon>Shewanellaceae</taxon>
        <taxon>Shewanella</taxon>
    </lineage>
</organism>
<name>GMHA_SHEHH</name>
<accession>B0TL65</accession>
<comment type="function">
    <text evidence="1">Catalyzes the isomerization of sedoheptulose 7-phosphate in D-glycero-D-manno-heptose 7-phosphate.</text>
</comment>
<comment type="catalytic activity">
    <reaction evidence="1">
        <text>2 D-sedoheptulose 7-phosphate = D-glycero-alpha-D-manno-heptose 7-phosphate + D-glycero-beta-D-manno-heptose 7-phosphate</text>
        <dbReference type="Rhea" id="RHEA:27489"/>
        <dbReference type="ChEBI" id="CHEBI:57483"/>
        <dbReference type="ChEBI" id="CHEBI:60203"/>
        <dbReference type="ChEBI" id="CHEBI:60204"/>
        <dbReference type="EC" id="5.3.1.28"/>
    </reaction>
</comment>
<comment type="cofactor">
    <cofactor evidence="1">
        <name>Zn(2+)</name>
        <dbReference type="ChEBI" id="CHEBI:29105"/>
    </cofactor>
    <text evidence="1">Binds 1 zinc ion per subunit.</text>
</comment>
<comment type="pathway">
    <text evidence="1">Carbohydrate biosynthesis; D-glycero-D-manno-heptose 7-phosphate biosynthesis; D-glycero-alpha-D-manno-heptose 7-phosphate and D-glycero-beta-D-manno-heptose 7-phosphate from sedoheptulose 7-phosphate: step 1/1.</text>
</comment>
<comment type="subunit">
    <text evidence="1">Homotetramer.</text>
</comment>
<comment type="subcellular location">
    <subcellularLocation>
        <location evidence="1">Cytoplasm</location>
    </subcellularLocation>
</comment>
<comment type="miscellaneous">
    <text evidence="1">The reaction produces a racemic mixture of D-glycero-alpha-D-manno-heptose 7-phosphate and D-glycero-beta-D-manno-heptose 7-phosphate.</text>
</comment>
<comment type="similarity">
    <text evidence="1">Belongs to the SIS family. GmhA subfamily.</text>
</comment>
<sequence length="197" mass="20990">MLERIKDSFTESIQTKIDASEALPESIAKAAEMMVHCLLSGNKILACGNGGSAGDAQHFSAELLNRYEIERPPLPAIALSCDTSTITAIANDYSYDEIFSKQIMALGQPGDILLAISTSGNSGNVIKAMEAALSRDMTIVSLTGKDGGAMAGLLSVNDVEIRVPSNVTARIQEVHLLAIHCLCDNIDHTLFPQDEQA</sequence>
<protein>
    <recommendedName>
        <fullName evidence="1">Phosphoheptose isomerase</fullName>
        <ecNumber evidence="1">5.3.1.28</ecNumber>
    </recommendedName>
    <alternativeName>
        <fullName evidence="1">Sedoheptulose 7-phosphate isomerase</fullName>
    </alternativeName>
</protein>
<keyword id="KW-0119">Carbohydrate metabolism</keyword>
<keyword id="KW-0963">Cytoplasm</keyword>
<keyword id="KW-0413">Isomerase</keyword>
<keyword id="KW-0479">Metal-binding</keyword>
<keyword id="KW-0862">Zinc</keyword>
<feature type="chain" id="PRO_1000197019" description="Phosphoheptose isomerase">
    <location>
        <begin position="1"/>
        <end position="197"/>
    </location>
</feature>
<feature type="domain" description="SIS" evidence="1">
    <location>
        <begin position="34"/>
        <end position="196"/>
    </location>
</feature>
<feature type="binding site" evidence="1">
    <location>
        <begin position="49"/>
        <end position="51"/>
    </location>
    <ligand>
        <name>substrate</name>
    </ligand>
</feature>
<feature type="binding site" evidence="1">
    <location>
        <position position="58"/>
    </location>
    <ligand>
        <name>Zn(2+)</name>
        <dbReference type="ChEBI" id="CHEBI:29105"/>
    </ligand>
</feature>
<feature type="binding site" evidence="1">
    <location>
        <position position="62"/>
    </location>
    <ligand>
        <name>substrate</name>
    </ligand>
</feature>
<feature type="binding site" evidence="1">
    <location>
        <position position="62"/>
    </location>
    <ligand>
        <name>Zn(2+)</name>
        <dbReference type="ChEBI" id="CHEBI:29105"/>
    </ligand>
</feature>
<feature type="binding site" evidence="1">
    <location>
        <begin position="91"/>
        <end position="92"/>
    </location>
    <ligand>
        <name>substrate</name>
    </ligand>
</feature>
<feature type="binding site" evidence="1">
    <location>
        <begin position="117"/>
        <end position="119"/>
    </location>
    <ligand>
        <name>substrate</name>
    </ligand>
</feature>
<feature type="binding site" evidence="1">
    <location>
        <position position="122"/>
    </location>
    <ligand>
        <name>substrate</name>
    </ligand>
</feature>
<feature type="binding site" evidence="1">
    <location>
        <position position="172"/>
    </location>
    <ligand>
        <name>substrate</name>
    </ligand>
</feature>
<feature type="binding site" evidence="1">
    <location>
        <position position="172"/>
    </location>
    <ligand>
        <name>Zn(2+)</name>
        <dbReference type="ChEBI" id="CHEBI:29105"/>
    </ligand>
</feature>
<feature type="binding site" evidence="1">
    <location>
        <position position="180"/>
    </location>
    <ligand>
        <name>Zn(2+)</name>
        <dbReference type="ChEBI" id="CHEBI:29105"/>
    </ligand>
</feature>